<sequence length="296" mass="31418">MKIRVATRGSKLSLIQTEELLAQIKAVEPDIRFEIVVVKTTGDLIQDKPLFQIGVKGVFEKEVNLAVLRGEADMAVHSLKDLPSDLTPGLALAGYSRRAPPNDALVSPRGYTLETLPRGAVVGTSSVRRAEFLKAARPDLEIKPLRGNVDTRVAKILSGQYDAAVMAAAGLQRLYGGAPPIPAVPLAVEDLPPPPGQGIVAAVAREEDTWLTDLLRRASDRKAAAEAAAERAFLAEVGAGCHVAVGGIARQTPAGIEFTAGYAQGGRKHLVKVYGEDPTEVGRRAARLVAQAMKKT</sequence>
<proteinExistence type="inferred from homology"/>
<feature type="chain" id="PRO_1000114182" description="Probable porphobilinogen deaminase">
    <location>
        <begin position="1"/>
        <end position="296"/>
    </location>
</feature>
<feature type="modified residue" description="S-(dipyrrolylmethanemethyl)cysteine" evidence="1">
    <location>
        <position position="241"/>
    </location>
</feature>
<dbReference type="EC" id="2.5.1.61" evidence="1"/>
<dbReference type="EMBL" id="CP001014">
    <property type="protein sequence ID" value="ACB39903.1"/>
    <property type="molecule type" value="Genomic_DNA"/>
</dbReference>
<dbReference type="RefSeq" id="WP_012350323.1">
    <property type="nucleotide sequence ID" value="NC_010525.1"/>
</dbReference>
<dbReference type="SMR" id="B1YDP0"/>
<dbReference type="STRING" id="444157.Tneu_0968"/>
<dbReference type="GeneID" id="6164556"/>
<dbReference type="KEGG" id="tne:Tneu_0968"/>
<dbReference type="eggNOG" id="arCOG04299">
    <property type="taxonomic scope" value="Archaea"/>
</dbReference>
<dbReference type="HOGENOM" id="CLU_019704_1_0_2"/>
<dbReference type="OrthoDB" id="8042at2157"/>
<dbReference type="UniPathway" id="UPA00251">
    <property type="reaction ID" value="UER00319"/>
</dbReference>
<dbReference type="Proteomes" id="UP000001694">
    <property type="component" value="Chromosome"/>
</dbReference>
<dbReference type="GO" id="GO:0005737">
    <property type="term" value="C:cytoplasm"/>
    <property type="evidence" value="ECO:0007669"/>
    <property type="project" value="TreeGrafter"/>
</dbReference>
<dbReference type="GO" id="GO:0004418">
    <property type="term" value="F:hydroxymethylbilane synthase activity"/>
    <property type="evidence" value="ECO:0007669"/>
    <property type="project" value="UniProtKB-UniRule"/>
</dbReference>
<dbReference type="GO" id="GO:0006782">
    <property type="term" value="P:protoporphyrinogen IX biosynthetic process"/>
    <property type="evidence" value="ECO:0007669"/>
    <property type="project" value="UniProtKB-UniRule"/>
</dbReference>
<dbReference type="FunFam" id="3.40.190.10:FF:000005">
    <property type="entry name" value="Porphobilinogen deaminase"/>
    <property type="match status" value="1"/>
</dbReference>
<dbReference type="Gene3D" id="3.40.190.10">
    <property type="entry name" value="Periplasmic binding protein-like II"/>
    <property type="match status" value="2"/>
</dbReference>
<dbReference type="Gene3D" id="3.30.160.40">
    <property type="entry name" value="Porphobilinogen deaminase, C-terminal domain"/>
    <property type="match status" value="1"/>
</dbReference>
<dbReference type="HAMAP" id="MF_00260">
    <property type="entry name" value="Porphobil_deam"/>
    <property type="match status" value="1"/>
</dbReference>
<dbReference type="InterPro" id="IPR000860">
    <property type="entry name" value="HemC"/>
</dbReference>
<dbReference type="InterPro" id="IPR022419">
    <property type="entry name" value="Porphobilin_deaminase_cofac_BS"/>
</dbReference>
<dbReference type="InterPro" id="IPR022417">
    <property type="entry name" value="Porphobilin_deaminase_N"/>
</dbReference>
<dbReference type="InterPro" id="IPR022418">
    <property type="entry name" value="Porphobilinogen_deaminase_C"/>
</dbReference>
<dbReference type="InterPro" id="IPR036803">
    <property type="entry name" value="Porphobilinogen_deaminase_C_sf"/>
</dbReference>
<dbReference type="NCBIfam" id="TIGR00212">
    <property type="entry name" value="hemC"/>
    <property type="match status" value="1"/>
</dbReference>
<dbReference type="PANTHER" id="PTHR11557">
    <property type="entry name" value="PORPHOBILINOGEN DEAMINASE"/>
    <property type="match status" value="1"/>
</dbReference>
<dbReference type="PANTHER" id="PTHR11557:SF0">
    <property type="entry name" value="PORPHOBILINOGEN DEAMINASE"/>
    <property type="match status" value="1"/>
</dbReference>
<dbReference type="Pfam" id="PF01379">
    <property type="entry name" value="Porphobil_deam"/>
    <property type="match status" value="1"/>
</dbReference>
<dbReference type="Pfam" id="PF03900">
    <property type="entry name" value="Porphobil_deamC"/>
    <property type="match status" value="1"/>
</dbReference>
<dbReference type="PIRSF" id="PIRSF001438">
    <property type="entry name" value="4pyrrol_synth_OHMeBilane_synth"/>
    <property type="match status" value="1"/>
</dbReference>
<dbReference type="PRINTS" id="PR00151">
    <property type="entry name" value="PORPHBDMNASE"/>
</dbReference>
<dbReference type="SUPFAM" id="SSF53850">
    <property type="entry name" value="Periplasmic binding protein-like II"/>
    <property type="match status" value="1"/>
</dbReference>
<dbReference type="SUPFAM" id="SSF54782">
    <property type="entry name" value="Porphobilinogen deaminase (hydroxymethylbilane synthase), C-terminal domain"/>
    <property type="match status" value="1"/>
</dbReference>
<dbReference type="PROSITE" id="PS00533">
    <property type="entry name" value="PORPHOBILINOGEN_DEAM"/>
    <property type="match status" value="1"/>
</dbReference>
<gene>
    <name evidence="1" type="primary">hemC</name>
    <name type="ordered locus">Tneu_0968</name>
</gene>
<evidence type="ECO:0000255" key="1">
    <source>
        <dbReference type="HAMAP-Rule" id="MF_00260"/>
    </source>
</evidence>
<accession>B1YDP0</accession>
<reference key="1">
    <citation type="submission" date="2008-03" db="EMBL/GenBank/DDBJ databases">
        <title>Complete sequence of Thermoproteus neutrophilus V24Sta.</title>
        <authorList>
            <consortium name="US DOE Joint Genome Institute"/>
            <person name="Copeland A."/>
            <person name="Lucas S."/>
            <person name="Lapidus A."/>
            <person name="Glavina del Rio T."/>
            <person name="Dalin E."/>
            <person name="Tice H."/>
            <person name="Bruce D."/>
            <person name="Goodwin L."/>
            <person name="Pitluck S."/>
            <person name="Sims D."/>
            <person name="Brettin T."/>
            <person name="Detter J.C."/>
            <person name="Han C."/>
            <person name="Kuske C.R."/>
            <person name="Schmutz J."/>
            <person name="Larimer F."/>
            <person name="Land M."/>
            <person name="Hauser L."/>
            <person name="Kyrpides N."/>
            <person name="Mikhailova N."/>
            <person name="Biddle J.F."/>
            <person name="Zhang Z."/>
            <person name="Fitz-Gibbon S.T."/>
            <person name="Lowe T.M."/>
            <person name="Saltikov C."/>
            <person name="House C.H."/>
            <person name="Richardson P."/>
        </authorList>
    </citation>
    <scope>NUCLEOTIDE SEQUENCE [LARGE SCALE GENOMIC DNA]</scope>
    <source>
        <strain>DSM 2338 / JCM 9278 / NBRC 100436 / V24Sta</strain>
    </source>
</reference>
<comment type="function">
    <text evidence="1">Tetrapolymerization of the monopyrrole PBG into the hydroxymethylbilane pre-uroporphyrinogen in several discrete steps.</text>
</comment>
<comment type="catalytic activity">
    <reaction evidence="1">
        <text>4 porphobilinogen + H2O = hydroxymethylbilane + 4 NH4(+)</text>
        <dbReference type="Rhea" id="RHEA:13185"/>
        <dbReference type="ChEBI" id="CHEBI:15377"/>
        <dbReference type="ChEBI" id="CHEBI:28938"/>
        <dbReference type="ChEBI" id="CHEBI:57845"/>
        <dbReference type="ChEBI" id="CHEBI:58126"/>
        <dbReference type="EC" id="2.5.1.61"/>
    </reaction>
</comment>
<comment type="cofactor">
    <cofactor evidence="1">
        <name>dipyrromethane</name>
        <dbReference type="ChEBI" id="CHEBI:60342"/>
    </cofactor>
    <text evidence="1">Binds 1 dipyrromethane group covalently.</text>
</comment>
<comment type="pathway">
    <text evidence="1">Porphyrin-containing compound metabolism; protoporphyrin-IX biosynthesis; coproporphyrinogen-III from 5-aminolevulinate: step 2/4.</text>
</comment>
<comment type="miscellaneous">
    <text evidence="1">The porphobilinogen subunits are added to the dipyrromethane group.</text>
</comment>
<comment type="similarity">
    <text evidence="1">Belongs to the HMBS family.</text>
</comment>
<name>HEM3_PYRNV</name>
<protein>
    <recommendedName>
        <fullName evidence="1">Probable porphobilinogen deaminase</fullName>
        <shortName evidence="1">PBG</shortName>
        <ecNumber evidence="1">2.5.1.61</ecNumber>
    </recommendedName>
    <alternativeName>
        <fullName evidence="1">Hydroxymethylbilane synthase</fullName>
        <shortName evidence="1">HMBS</shortName>
    </alternativeName>
    <alternativeName>
        <fullName evidence="1">Pre-uroporphyrinogen synthase</fullName>
    </alternativeName>
</protein>
<keyword id="KW-0627">Porphyrin biosynthesis</keyword>
<keyword id="KW-0808">Transferase</keyword>
<organism>
    <name type="scientific">Pyrobaculum neutrophilum (strain DSM 2338 / JCM 9278 / NBRC 100436 / V24Sta)</name>
    <name type="common">Thermoproteus neutrophilus</name>
    <dbReference type="NCBI Taxonomy" id="444157"/>
    <lineage>
        <taxon>Archaea</taxon>
        <taxon>Thermoproteota</taxon>
        <taxon>Thermoprotei</taxon>
        <taxon>Thermoproteales</taxon>
        <taxon>Thermoproteaceae</taxon>
        <taxon>Pyrobaculum</taxon>
    </lineage>
</organism>